<proteinExistence type="inferred from homology"/>
<gene>
    <name type="primary">MT-ND1</name>
    <name type="synonym">MTND1</name>
    <name type="synonym">NADH1</name>
    <name type="synonym">ND1</name>
</gene>
<keyword id="KW-0249">Electron transport</keyword>
<keyword id="KW-0472">Membrane</keyword>
<keyword id="KW-0496">Mitochondrion</keyword>
<keyword id="KW-0999">Mitochondrion inner membrane</keyword>
<keyword id="KW-0520">NAD</keyword>
<keyword id="KW-0679">Respiratory chain</keyword>
<keyword id="KW-1278">Translocase</keyword>
<keyword id="KW-0812">Transmembrane</keyword>
<keyword id="KW-1133">Transmembrane helix</keyword>
<keyword id="KW-0813">Transport</keyword>
<keyword id="KW-0830">Ubiquinone</keyword>
<name>NU1M_ELEMA</name>
<evidence type="ECO:0000250" key="1">
    <source>
        <dbReference type="UniProtKB" id="P03886"/>
    </source>
</evidence>
<evidence type="ECO:0000250" key="2">
    <source>
        <dbReference type="UniProtKB" id="P03887"/>
    </source>
</evidence>
<evidence type="ECO:0000255" key="3"/>
<evidence type="ECO:0000305" key="4"/>
<comment type="function">
    <text evidence="1">Core subunit of the mitochondrial membrane respiratory chain NADH dehydrogenase (Complex I) which catalyzes electron transfer from NADH through the respiratory chain, using ubiquinone as an electron acceptor. Essential for the catalytic activity and assembly of complex I.</text>
</comment>
<comment type="catalytic activity">
    <reaction evidence="1">
        <text>a ubiquinone + NADH + 5 H(+)(in) = a ubiquinol + NAD(+) + 4 H(+)(out)</text>
        <dbReference type="Rhea" id="RHEA:29091"/>
        <dbReference type="Rhea" id="RHEA-COMP:9565"/>
        <dbReference type="Rhea" id="RHEA-COMP:9566"/>
        <dbReference type="ChEBI" id="CHEBI:15378"/>
        <dbReference type="ChEBI" id="CHEBI:16389"/>
        <dbReference type="ChEBI" id="CHEBI:17976"/>
        <dbReference type="ChEBI" id="CHEBI:57540"/>
        <dbReference type="ChEBI" id="CHEBI:57945"/>
        <dbReference type="EC" id="7.1.1.2"/>
    </reaction>
</comment>
<comment type="subunit">
    <text evidence="2">Core subunit of respiratory chain NADH dehydrogenase (Complex I) which is composed of 45 different subunits.</text>
</comment>
<comment type="subcellular location">
    <subcellularLocation>
        <location evidence="2">Mitochondrion inner membrane</location>
        <topology evidence="3">Multi-pass membrane protein</topology>
    </subcellularLocation>
</comment>
<comment type="similarity">
    <text evidence="4">Belongs to the complex I subunit 1 family.</text>
</comment>
<accession>Q2I3H4</accession>
<protein>
    <recommendedName>
        <fullName>NADH-ubiquinone oxidoreductase chain 1</fullName>
        <ecNumber evidence="1">7.1.1.2</ecNumber>
    </recommendedName>
    <alternativeName>
        <fullName>NADH dehydrogenase subunit 1</fullName>
    </alternativeName>
</protein>
<reference key="1">
    <citation type="journal article" date="2006" name="PLoS Biol.">
        <title>Complete mitochondrial genome and phylogeny of Pleistocene mammoth Mammuthus primigenius.</title>
        <authorList>
            <person name="Rogaev E.I."/>
            <person name="Moliaka Y.K."/>
            <person name="Malyarchuk B.A."/>
            <person name="Kondrashov F.A."/>
            <person name="Derenko M.V."/>
            <person name="Chumakov I."/>
            <person name="Grigorenko A.P."/>
        </authorList>
    </citation>
    <scope>NUCLEOTIDE SEQUENCE [GENOMIC DNA]</scope>
    <source>
        <tissue>Blood</tissue>
    </source>
</reference>
<sequence length="318" mass="35789">MFLINVLTVTLPILPAVAFLTLVERKALGYMQLRKGPNVVGPYGLLQPIADAIKLFTKEPIYPQTSSKFLFTVAPILALTLALTVWAPLPMPYPLINLNLSLLFILAMSSLMVYSILWSGWASNSKYALMGALRAVAQTISYEVSMTTITLSMVLMNGSFTLTAFATTQEHLWLIFPMWPLMMMWFTSTLAETNRAPFDLTEGESELVSGFNVEYSAGPFALFFMAEYANIIMMNALTVILFMGTSCDPQMPEISTINFVMKTIILTICFLWVRASYPRFRYDQLMYLLWKNFLPLTLALCMWHISILISLACIPPQA</sequence>
<dbReference type="EC" id="7.1.1.2" evidence="1"/>
<dbReference type="EMBL" id="DQ316068">
    <property type="protein sequence ID" value="ABC17891.1"/>
    <property type="molecule type" value="Genomic_DNA"/>
</dbReference>
<dbReference type="RefSeq" id="YP_626367.1">
    <property type="nucleotide sequence ID" value="NC_005129.2"/>
</dbReference>
<dbReference type="SMR" id="Q2I3H4"/>
<dbReference type="GeneID" id="2610367"/>
<dbReference type="CTD" id="4535"/>
<dbReference type="GO" id="GO:0005743">
    <property type="term" value="C:mitochondrial inner membrane"/>
    <property type="evidence" value="ECO:0000250"/>
    <property type="project" value="UniProtKB"/>
</dbReference>
<dbReference type="GO" id="GO:0008137">
    <property type="term" value="F:NADH dehydrogenase (ubiquinone) activity"/>
    <property type="evidence" value="ECO:0000250"/>
    <property type="project" value="UniProtKB"/>
</dbReference>
<dbReference type="GO" id="GO:0006120">
    <property type="term" value="P:mitochondrial electron transport, NADH to ubiquinone"/>
    <property type="evidence" value="ECO:0000250"/>
    <property type="project" value="UniProtKB"/>
</dbReference>
<dbReference type="GO" id="GO:0032981">
    <property type="term" value="P:mitochondrial respiratory chain complex I assembly"/>
    <property type="evidence" value="ECO:0000250"/>
    <property type="project" value="UniProtKB"/>
</dbReference>
<dbReference type="HAMAP" id="MF_01350">
    <property type="entry name" value="NDH1_NuoH"/>
    <property type="match status" value="1"/>
</dbReference>
<dbReference type="InterPro" id="IPR001694">
    <property type="entry name" value="NADH_UbQ_OxRdtase_su1/FPO"/>
</dbReference>
<dbReference type="InterPro" id="IPR018086">
    <property type="entry name" value="NADH_UbQ_OxRdtase_su1_CS"/>
</dbReference>
<dbReference type="PANTHER" id="PTHR11432">
    <property type="entry name" value="NADH DEHYDROGENASE SUBUNIT 1"/>
    <property type="match status" value="1"/>
</dbReference>
<dbReference type="PANTHER" id="PTHR11432:SF3">
    <property type="entry name" value="NADH-UBIQUINONE OXIDOREDUCTASE CHAIN 1"/>
    <property type="match status" value="1"/>
</dbReference>
<dbReference type="Pfam" id="PF00146">
    <property type="entry name" value="NADHdh"/>
    <property type="match status" value="1"/>
</dbReference>
<dbReference type="PROSITE" id="PS00667">
    <property type="entry name" value="COMPLEX1_ND1_1"/>
    <property type="match status" value="1"/>
</dbReference>
<dbReference type="PROSITE" id="PS00668">
    <property type="entry name" value="COMPLEX1_ND1_2"/>
    <property type="match status" value="1"/>
</dbReference>
<geneLocation type="mitochondrion"/>
<feature type="chain" id="PRO_0000232846" description="NADH-ubiquinone oxidoreductase chain 1">
    <location>
        <begin position="1"/>
        <end position="318"/>
    </location>
</feature>
<feature type="transmembrane region" description="Helical" evidence="3">
    <location>
        <begin position="2"/>
        <end position="22"/>
    </location>
</feature>
<feature type="transmembrane region" description="Helical" evidence="3">
    <location>
        <begin position="69"/>
        <end position="89"/>
    </location>
</feature>
<feature type="transmembrane region" description="Helical" evidence="3">
    <location>
        <begin position="102"/>
        <end position="122"/>
    </location>
</feature>
<feature type="transmembrane region" description="Helical" evidence="3">
    <location>
        <begin position="146"/>
        <end position="166"/>
    </location>
</feature>
<feature type="transmembrane region" description="Helical" evidence="3">
    <location>
        <begin position="171"/>
        <end position="191"/>
    </location>
</feature>
<feature type="transmembrane region" description="Helical" evidence="3">
    <location>
        <begin position="222"/>
        <end position="242"/>
    </location>
</feature>
<feature type="transmembrane region" description="Helical" evidence="3">
    <location>
        <begin position="253"/>
        <end position="273"/>
    </location>
</feature>
<feature type="transmembrane region" description="Helical" evidence="3">
    <location>
        <begin position="294"/>
        <end position="314"/>
    </location>
</feature>
<organism>
    <name type="scientific">Elephas maximus</name>
    <name type="common">Indian elephant</name>
    <dbReference type="NCBI Taxonomy" id="9783"/>
    <lineage>
        <taxon>Eukaryota</taxon>
        <taxon>Metazoa</taxon>
        <taxon>Chordata</taxon>
        <taxon>Craniata</taxon>
        <taxon>Vertebrata</taxon>
        <taxon>Euteleostomi</taxon>
        <taxon>Mammalia</taxon>
        <taxon>Eutheria</taxon>
        <taxon>Afrotheria</taxon>
        <taxon>Proboscidea</taxon>
        <taxon>Elephantidae</taxon>
        <taxon>Elephas</taxon>
    </lineage>
</organism>